<name>ESR1_SALSA</name>
<accession>P50242</accession>
<organism>
    <name type="scientific">Salmo salar</name>
    <name type="common">Atlantic salmon</name>
    <dbReference type="NCBI Taxonomy" id="8030"/>
    <lineage>
        <taxon>Eukaryota</taxon>
        <taxon>Metazoa</taxon>
        <taxon>Chordata</taxon>
        <taxon>Craniata</taxon>
        <taxon>Vertebrata</taxon>
        <taxon>Euteleostomi</taxon>
        <taxon>Actinopterygii</taxon>
        <taxon>Neopterygii</taxon>
        <taxon>Teleostei</taxon>
        <taxon>Protacanthopterygii</taxon>
        <taxon>Salmoniformes</taxon>
        <taxon>Salmonidae</taxon>
        <taxon>Salmoninae</taxon>
        <taxon>Salmo</taxon>
    </lineage>
</organism>
<sequence length="535" mass="58900">SRMLTDPPRIGSMQSLGSSPTGPLVFVSSSPQLSPFLHPPGHHGLPSQSYYLETSSTPLYRSSVVTNQLSASEEKLCITSNRQQSYAAAGSGVRVFEMANETRYCAVCSDFASGYHYGFWSCEGCKAFFKRSIQGHNDYMCPATNQCTMDRNRRKSCQACRLRKCYEVGMVKGGLRKDRGGRVLRKDKRYCGPAGDREKPYGDLEHRTAPPQDGGRNSSSSSLSGGGGWCGPRITMPPEQVLFLLQGAEPPALCSRQKVARPYTEVTMMTLLTSMADKELVHMIAWAKKVPGFQELSLHDQVQLLESSWLEVLMIGLIWRSIHCPGKLIFAQDLILDRSEGDCVEGMAEIFDMLLATVSRFRMLKLKPEEFVCLKAIILLNSGAFSFCSNSVESLHNSSAVESMLDNITDALIHHISHSGASVQQQPRRQVQLLLLLSHIRHMSNKGMEHLYSIKCKNKVPLYDLLLEMLDGHRLQSPGKVAQAGEQTEGPSTTTTTSTGSSIGPMRGSQDTHIRSPGSGVLQYGSPSSDQMPIP</sequence>
<proteinExistence type="evidence at transcript level"/>
<protein>
    <recommendedName>
        <fullName>Estrogen receptor</fullName>
        <shortName>ER</shortName>
    </recommendedName>
    <alternativeName>
        <fullName>ER-alpha</fullName>
    </alternativeName>
    <alternativeName>
        <fullName>Estradiol receptor</fullName>
    </alternativeName>
    <alternativeName>
        <fullName>Nuclear receptor subfamily 3 group A member 1</fullName>
    </alternativeName>
</protein>
<keyword id="KW-0238">DNA-binding</keyword>
<keyword id="KW-0446">Lipid-binding</keyword>
<keyword id="KW-0479">Metal-binding</keyword>
<keyword id="KW-0539">Nucleus</keyword>
<keyword id="KW-0675">Receptor</keyword>
<keyword id="KW-1185">Reference proteome</keyword>
<keyword id="KW-0754">Steroid-binding</keyword>
<keyword id="KW-0804">Transcription</keyword>
<keyword id="KW-0805">Transcription regulation</keyword>
<keyword id="KW-0862">Zinc</keyword>
<keyword id="KW-0863">Zinc-finger</keyword>
<evidence type="ECO:0000250" key="1"/>
<evidence type="ECO:0000255" key="2"/>
<evidence type="ECO:0000255" key="3">
    <source>
        <dbReference type="PROSITE-ProRule" id="PRU00407"/>
    </source>
</evidence>
<evidence type="ECO:0000255" key="4">
    <source>
        <dbReference type="PROSITE-ProRule" id="PRU01189"/>
    </source>
</evidence>
<evidence type="ECO:0000256" key="5">
    <source>
        <dbReference type="SAM" id="MobiDB-lite"/>
    </source>
</evidence>
<evidence type="ECO:0000269" key="6">
    <source>
    </source>
</evidence>
<evidence type="ECO:0000305" key="7"/>
<gene>
    <name type="primary">esr1</name>
    <name type="synonym">esr</name>
    <name type="synonym">nr3a1</name>
</gene>
<reference key="1">
    <citation type="journal article" date="2000" name="Comp. Biochem. Physiol.">
        <title>Cloning of the Atlantic salmon (Salmo salar) estrogen receptor-alpha gene.</title>
        <authorList>
            <person name="Rogers S.A."/>
            <person name="Llewellyn L."/>
            <person name="Wigham T."/>
            <person name="Sweeney G.E."/>
        </authorList>
    </citation>
    <scope>NUCLEOTIDE SEQUENCE [MRNA]</scope>
    <scope>TISSUE SPECIFICITY</scope>
    <source>
        <tissue>Liver</tissue>
    </source>
</reference>
<dbReference type="EMBL" id="X89959">
    <property type="protein sequence ID" value="CAA61999.1"/>
    <property type="molecule type" value="mRNA"/>
</dbReference>
<dbReference type="PIR" id="S58224">
    <property type="entry name" value="S58224"/>
</dbReference>
<dbReference type="SMR" id="P50242"/>
<dbReference type="STRING" id="8030.ENSSSAP00000015760"/>
<dbReference type="PaxDb" id="8030-ENSSSAP00000015760"/>
<dbReference type="Proteomes" id="UP000087266">
    <property type="component" value="Unplaced"/>
</dbReference>
<dbReference type="GO" id="GO:0005634">
    <property type="term" value="C:nucleus"/>
    <property type="evidence" value="ECO:0000250"/>
    <property type="project" value="UniProtKB"/>
</dbReference>
<dbReference type="GO" id="GO:1903924">
    <property type="term" value="F:estradiol binding"/>
    <property type="evidence" value="ECO:0000250"/>
    <property type="project" value="AgBase"/>
</dbReference>
<dbReference type="GO" id="GO:0042562">
    <property type="term" value="F:hormone binding"/>
    <property type="evidence" value="ECO:0007669"/>
    <property type="project" value="UniProtKB-ARBA"/>
</dbReference>
<dbReference type="GO" id="GO:0030284">
    <property type="term" value="F:nuclear estrogen receptor activity"/>
    <property type="evidence" value="ECO:0000250"/>
    <property type="project" value="AgBase"/>
</dbReference>
<dbReference type="GO" id="GO:0043565">
    <property type="term" value="F:sequence-specific DNA binding"/>
    <property type="evidence" value="ECO:0007669"/>
    <property type="project" value="InterPro"/>
</dbReference>
<dbReference type="GO" id="GO:0008270">
    <property type="term" value="F:zinc ion binding"/>
    <property type="evidence" value="ECO:0007669"/>
    <property type="project" value="UniProtKB-KW"/>
</dbReference>
<dbReference type="GO" id="GO:0032355">
    <property type="term" value="P:response to estradiol"/>
    <property type="evidence" value="ECO:0000250"/>
    <property type="project" value="AgBase"/>
</dbReference>
<dbReference type="CDD" id="cd07171">
    <property type="entry name" value="NR_DBD_ER"/>
    <property type="match status" value="1"/>
</dbReference>
<dbReference type="FunFam" id="1.10.565.10:FF:000010">
    <property type="entry name" value="Estrogen receptor"/>
    <property type="match status" value="1"/>
</dbReference>
<dbReference type="FunFam" id="3.30.50.10:FF:000139">
    <property type="entry name" value="Estrogen receptor beta a variant b"/>
    <property type="match status" value="1"/>
</dbReference>
<dbReference type="Gene3D" id="3.30.50.10">
    <property type="entry name" value="Erythroid Transcription Factor GATA-1, subunit A"/>
    <property type="match status" value="1"/>
</dbReference>
<dbReference type="Gene3D" id="1.10.565.10">
    <property type="entry name" value="Retinoid X Receptor"/>
    <property type="match status" value="1"/>
</dbReference>
<dbReference type="InterPro" id="IPR024178">
    <property type="entry name" value="Est_rcpt/est-rel_rcp"/>
</dbReference>
<dbReference type="InterPro" id="IPR001292">
    <property type="entry name" value="Estr_rcpt"/>
</dbReference>
<dbReference type="InterPro" id="IPR046944">
    <property type="entry name" value="Estr_rcpt_N"/>
</dbReference>
<dbReference type="InterPro" id="IPR035500">
    <property type="entry name" value="NHR-like_dom_sf"/>
</dbReference>
<dbReference type="InterPro" id="IPR000536">
    <property type="entry name" value="Nucl_hrmn_rcpt_lig-bd"/>
</dbReference>
<dbReference type="InterPro" id="IPR050200">
    <property type="entry name" value="Nuclear_hormone_rcpt_NR3"/>
</dbReference>
<dbReference type="InterPro" id="IPR001723">
    <property type="entry name" value="Nuclear_hrmn_rcpt"/>
</dbReference>
<dbReference type="InterPro" id="IPR001628">
    <property type="entry name" value="Znf_hrmn_rcpt"/>
</dbReference>
<dbReference type="InterPro" id="IPR013088">
    <property type="entry name" value="Znf_NHR/GATA"/>
</dbReference>
<dbReference type="PANTHER" id="PTHR48092">
    <property type="entry name" value="KNIRPS-RELATED PROTEIN-RELATED"/>
    <property type="match status" value="1"/>
</dbReference>
<dbReference type="Pfam" id="PF00104">
    <property type="entry name" value="Hormone_recep"/>
    <property type="match status" value="1"/>
</dbReference>
<dbReference type="Pfam" id="PF02159">
    <property type="entry name" value="Oest_recep"/>
    <property type="match status" value="1"/>
</dbReference>
<dbReference type="Pfam" id="PF00105">
    <property type="entry name" value="zf-C4"/>
    <property type="match status" value="1"/>
</dbReference>
<dbReference type="PIRSF" id="PIRSF500101">
    <property type="entry name" value="ER-a"/>
    <property type="match status" value="1"/>
</dbReference>
<dbReference type="PIRSF" id="PIRSF002527">
    <property type="entry name" value="ER-like_NR"/>
    <property type="match status" value="1"/>
</dbReference>
<dbReference type="PRINTS" id="PR00398">
    <property type="entry name" value="STRDHORMONER"/>
</dbReference>
<dbReference type="PRINTS" id="PR00047">
    <property type="entry name" value="STROIDFINGER"/>
</dbReference>
<dbReference type="SMART" id="SM00430">
    <property type="entry name" value="HOLI"/>
    <property type="match status" value="1"/>
</dbReference>
<dbReference type="SMART" id="SM00399">
    <property type="entry name" value="ZnF_C4"/>
    <property type="match status" value="1"/>
</dbReference>
<dbReference type="SUPFAM" id="SSF57716">
    <property type="entry name" value="Glucocorticoid receptor-like (DNA-binding domain)"/>
    <property type="match status" value="1"/>
</dbReference>
<dbReference type="SUPFAM" id="SSF48508">
    <property type="entry name" value="Nuclear receptor ligand-binding domain"/>
    <property type="match status" value="1"/>
</dbReference>
<dbReference type="PROSITE" id="PS51843">
    <property type="entry name" value="NR_LBD"/>
    <property type="match status" value="1"/>
</dbReference>
<dbReference type="PROSITE" id="PS00031">
    <property type="entry name" value="NUCLEAR_REC_DBD_1"/>
    <property type="match status" value="1"/>
</dbReference>
<dbReference type="PROSITE" id="PS51030">
    <property type="entry name" value="NUCLEAR_REC_DBD_2"/>
    <property type="match status" value="1"/>
</dbReference>
<comment type="function">
    <text>The steroid hormones and their receptors are involved in the regulation of eukaryotic gene expression and affect cellular proliferation and differentiation in target tissues.</text>
</comment>
<comment type="subunit">
    <text evidence="1">Binds DNA as a homodimer. Can form a heterodimer with ER-beta (By similarity).</text>
</comment>
<comment type="subcellular location">
    <subcellularLocation>
        <location>Nucleus</location>
    </subcellularLocation>
</comment>
<comment type="tissue specificity">
    <text evidence="6">Highest expression in brain and liver.</text>
</comment>
<comment type="domain">
    <text>Composed of three domains: a modulating N-terminal domain, a DNA-binding domain and a C-terminal ligand-binding domain.</text>
</comment>
<comment type="similarity">
    <text evidence="7">Belongs to the nuclear hormone receptor family. NR3 subfamily.</text>
</comment>
<feature type="chain" id="PRO_0000053637" description="Estrogen receptor">
    <location>
        <begin position="1" status="less than"/>
        <end position="535"/>
    </location>
</feature>
<feature type="domain" description="NR LBD" evidence="4">
    <location>
        <begin position="237"/>
        <end position="473"/>
    </location>
</feature>
<feature type="DNA-binding region" description="Nuclear receptor" evidence="3">
    <location>
        <begin position="105"/>
        <end position="170"/>
    </location>
</feature>
<feature type="zinc finger region" description="NR C4-type" evidence="3">
    <location>
        <begin position="105"/>
        <end position="125"/>
    </location>
</feature>
<feature type="zinc finger region" description="NR C4-type" evidence="3">
    <location>
        <begin position="141"/>
        <end position="165"/>
    </location>
</feature>
<feature type="region of interest" description="Modulating" evidence="2">
    <location>
        <begin position="1" status="less than"/>
        <end position="104"/>
    </location>
</feature>
<feature type="region of interest" description="Disordered" evidence="5">
    <location>
        <begin position="1"/>
        <end position="21"/>
    </location>
</feature>
<feature type="region of interest" description="Hinge">
    <location>
        <begin position="171"/>
        <end position="236"/>
    </location>
</feature>
<feature type="region of interest" description="Disordered" evidence="5">
    <location>
        <begin position="187"/>
        <end position="229"/>
    </location>
</feature>
<feature type="region of interest" description="Disordered" evidence="5">
    <location>
        <begin position="478"/>
        <end position="535"/>
    </location>
</feature>
<feature type="compositionally biased region" description="Polar residues" evidence="5">
    <location>
        <begin position="12"/>
        <end position="21"/>
    </location>
</feature>
<feature type="compositionally biased region" description="Basic and acidic residues" evidence="5">
    <location>
        <begin position="195"/>
        <end position="208"/>
    </location>
</feature>
<feature type="compositionally biased region" description="Low complexity" evidence="5">
    <location>
        <begin position="214"/>
        <end position="223"/>
    </location>
</feature>
<feature type="compositionally biased region" description="Low complexity" evidence="5">
    <location>
        <begin position="492"/>
        <end position="502"/>
    </location>
</feature>
<feature type="compositionally biased region" description="Polar residues" evidence="5">
    <location>
        <begin position="525"/>
        <end position="535"/>
    </location>
</feature>
<feature type="non-terminal residue">
    <location>
        <position position="1"/>
    </location>
</feature>